<feature type="chain" id="PRO_0000272123" description="Lipoprotein-releasing system ATP-binding protein LolD">
    <location>
        <begin position="1"/>
        <end position="232"/>
    </location>
</feature>
<feature type="domain" description="ABC transporter" evidence="1">
    <location>
        <begin position="6"/>
        <end position="231"/>
    </location>
</feature>
<feature type="binding site" evidence="1">
    <location>
        <begin position="42"/>
        <end position="49"/>
    </location>
    <ligand>
        <name>ATP</name>
        <dbReference type="ChEBI" id="CHEBI:30616"/>
    </ligand>
</feature>
<evidence type="ECO:0000255" key="1">
    <source>
        <dbReference type="HAMAP-Rule" id="MF_01708"/>
    </source>
</evidence>
<proteinExistence type="inferred from homology"/>
<dbReference type="EC" id="7.6.2.-" evidence="1"/>
<dbReference type="EMBL" id="CR954246">
    <property type="protein sequence ID" value="CAI86464.1"/>
    <property type="molecule type" value="Genomic_DNA"/>
</dbReference>
<dbReference type="SMR" id="Q3IL62"/>
<dbReference type="STRING" id="326442.PSHAa1389"/>
<dbReference type="KEGG" id="pha:PSHAa1389"/>
<dbReference type="PATRIC" id="fig|326442.8.peg.1344"/>
<dbReference type="eggNOG" id="COG1136">
    <property type="taxonomic scope" value="Bacteria"/>
</dbReference>
<dbReference type="HOGENOM" id="CLU_000604_1_22_6"/>
<dbReference type="BioCyc" id="PHAL326442:PSHA_RS06830-MONOMER"/>
<dbReference type="Proteomes" id="UP000006843">
    <property type="component" value="Chromosome I"/>
</dbReference>
<dbReference type="GO" id="GO:0005886">
    <property type="term" value="C:plasma membrane"/>
    <property type="evidence" value="ECO:0007669"/>
    <property type="project" value="UniProtKB-SubCell"/>
</dbReference>
<dbReference type="GO" id="GO:0005524">
    <property type="term" value="F:ATP binding"/>
    <property type="evidence" value="ECO:0007669"/>
    <property type="project" value="UniProtKB-KW"/>
</dbReference>
<dbReference type="GO" id="GO:0016887">
    <property type="term" value="F:ATP hydrolysis activity"/>
    <property type="evidence" value="ECO:0007669"/>
    <property type="project" value="InterPro"/>
</dbReference>
<dbReference type="GO" id="GO:0044873">
    <property type="term" value="P:lipoprotein localization to membrane"/>
    <property type="evidence" value="ECO:0007669"/>
    <property type="project" value="InterPro"/>
</dbReference>
<dbReference type="CDD" id="cd03255">
    <property type="entry name" value="ABC_MJ0796_LolCDE_FtsE"/>
    <property type="match status" value="1"/>
</dbReference>
<dbReference type="FunFam" id="3.40.50.300:FF:000230">
    <property type="entry name" value="Lipoprotein-releasing system ATP-binding protein LolD"/>
    <property type="match status" value="1"/>
</dbReference>
<dbReference type="Gene3D" id="3.40.50.300">
    <property type="entry name" value="P-loop containing nucleotide triphosphate hydrolases"/>
    <property type="match status" value="1"/>
</dbReference>
<dbReference type="InterPro" id="IPR003593">
    <property type="entry name" value="AAA+_ATPase"/>
</dbReference>
<dbReference type="InterPro" id="IPR003439">
    <property type="entry name" value="ABC_transporter-like_ATP-bd"/>
</dbReference>
<dbReference type="InterPro" id="IPR017871">
    <property type="entry name" value="ABC_transporter-like_CS"/>
</dbReference>
<dbReference type="InterPro" id="IPR011924">
    <property type="entry name" value="LolD_lipo_ATP-bd"/>
</dbReference>
<dbReference type="InterPro" id="IPR017911">
    <property type="entry name" value="MacB-like_ATP-bd"/>
</dbReference>
<dbReference type="InterPro" id="IPR027417">
    <property type="entry name" value="P-loop_NTPase"/>
</dbReference>
<dbReference type="NCBIfam" id="TIGR02211">
    <property type="entry name" value="LolD_lipo_ex"/>
    <property type="match status" value="1"/>
</dbReference>
<dbReference type="PANTHER" id="PTHR42798:SF2">
    <property type="entry name" value="ABC TRANSPORTER ATP-BINDING PROTEIN MG467-RELATED"/>
    <property type="match status" value="1"/>
</dbReference>
<dbReference type="PANTHER" id="PTHR42798">
    <property type="entry name" value="LIPOPROTEIN-RELEASING SYSTEM ATP-BINDING PROTEIN LOLD"/>
    <property type="match status" value="1"/>
</dbReference>
<dbReference type="Pfam" id="PF00005">
    <property type="entry name" value="ABC_tran"/>
    <property type="match status" value="1"/>
</dbReference>
<dbReference type="SMART" id="SM00382">
    <property type="entry name" value="AAA"/>
    <property type="match status" value="1"/>
</dbReference>
<dbReference type="SUPFAM" id="SSF52540">
    <property type="entry name" value="P-loop containing nucleoside triphosphate hydrolases"/>
    <property type="match status" value="1"/>
</dbReference>
<dbReference type="PROSITE" id="PS00211">
    <property type="entry name" value="ABC_TRANSPORTER_1"/>
    <property type="match status" value="1"/>
</dbReference>
<dbReference type="PROSITE" id="PS50893">
    <property type="entry name" value="ABC_TRANSPORTER_2"/>
    <property type="match status" value="1"/>
</dbReference>
<dbReference type="PROSITE" id="PS51244">
    <property type="entry name" value="LOLD"/>
    <property type="match status" value="1"/>
</dbReference>
<name>LOLD_PSET1</name>
<reference key="1">
    <citation type="journal article" date="2005" name="Genome Res.">
        <title>Coping with cold: the genome of the versatile marine Antarctica bacterium Pseudoalteromonas haloplanktis TAC125.</title>
        <authorList>
            <person name="Medigue C."/>
            <person name="Krin E."/>
            <person name="Pascal G."/>
            <person name="Barbe V."/>
            <person name="Bernsel A."/>
            <person name="Bertin P.N."/>
            <person name="Cheung F."/>
            <person name="Cruveiller S."/>
            <person name="D'Amico S."/>
            <person name="Duilio A."/>
            <person name="Fang G."/>
            <person name="Feller G."/>
            <person name="Ho C."/>
            <person name="Mangenot S."/>
            <person name="Marino G."/>
            <person name="Nilsson J."/>
            <person name="Parrilli E."/>
            <person name="Rocha E.P.C."/>
            <person name="Rouy Z."/>
            <person name="Sekowska A."/>
            <person name="Tutino M.L."/>
            <person name="Vallenet D."/>
            <person name="von Heijne G."/>
            <person name="Danchin A."/>
        </authorList>
    </citation>
    <scope>NUCLEOTIDE SEQUENCE [LARGE SCALE GENOMIC DNA]</scope>
    <source>
        <strain>TAC 125</strain>
    </source>
</reference>
<organism>
    <name type="scientific">Pseudoalteromonas translucida (strain TAC 125)</name>
    <dbReference type="NCBI Taxonomy" id="326442"/>
    <lineage>
        <taxon>Bacteria</taxon>
        <taxon>Pseudomonadati</taxon>
        <taxon>Pseudomonadota</taxon>
        <taxon>Gammaproteobacteria</taxon>
        <taxon>Alteromonadales</taxon>
        <taxon>Pseudoalteromonadaceae</taxon>
        <taxon>Pseudoalteromonas</taxon>
    </lineage>
</organism>
<comment type="function">
    <text evidence="1">Part of the ABC transporter complex LolCDE involved in the translocation of mature outer membrane-directed lipoproteins, from the inner membrane to the periplasmic chaperone, LolA. Responsible for the formation of the LolA-lipoprotein complex in an ATP-dependent manner.</text>
</comment>
<comment type="subunit">
    <text evidence="1">The complex is composed of two ATP-binding proteins (LolD) and two transmembrane proteins (LolC and LolE).</text>
</comment>
<comment type="subcellular location">
    <subcellularLocation>
        <location evidence="1">Cell inner membrane</location>
        <topology evidence="1">Peripheral membrane protein</topology>
    </subcellularLocation>
</comment>
<comment type="similarity">
    <text evidence="1">Belongs to the ABC transporter superfamily. Lipoprotein translocase (TC 3.A.1.125) family.</text>
</comment>
<protein>
    <recommendedName>
        <fullName evidence="1">Lipoprotein-releasing system ATP-binding protein LolD</fullName>
        <ecNumber evidence="1">7.6.2.-</ecNumber>
    </recommendedName>
</protein>
<sequence length="232" mass="24940">MNDLVISCENLNKVYQDGSNQVAVLKGVDLALQQGEMLAIVGSSGSGKSTLLHILGTLDTATSGSAKIKNQEVAKLSRTEQAAFRNKNLGFIYQFHHLLMEFSAVENVAMPLLIKGLSAKAAKVAALEMLEKVGLAHRSSHKPSALSGGERQRVAIARALVTKPALVLADEPTGNLDKQNAIKIYDLINELNKSLNTSFVVVTHDLELADKLGKIAYLDDGKLTIKESQHVA</sequence>
<gene>
    <name evidence="1" type="primary">lolD</name>
    <name type="ordered locus">PSHAa1389</name>
</gene>
<accession>Q3IL62</accession>
<keyword id="KW-0067">ATP-binding</keyword>
<keyword id="KW-0997">Cell inner membrane</keyword>
<keyword id="KW-1003">Cell membrane</keyword>
<keyword id="KW-0472">Membrane</keyword>
<keyword id="KW-0547">Nucleotide-binding</keyword>
<keyword id="KW-1185">Reference proteome</keyword>
<keyword id="KW-1278">Translocase</keyword>
<keyword id="KW-0813">Transport</keyword>